<sequence>MKFFALFIYRPVATILISLAITLCGILGFRLLPVAPLPQVDFPVIMVSASLPGASPETMASSVATPLERSLGRIAGVNEMTSSSSLGSTRIILEFNFDRDINGAARDVQAAINAAQSLLPSGMPSRPTYRKANPSDAPIMILTLTSDTYSQGELYDFASTQLAQTIAQIDGVGDVDVGGSSLPAVRVDLNPQALFNQGVSLDAVRTAISDANVRKPQGALEDSAHRWQVQTNDELKTAADYQPLIVHYQNGAAVRLGDVATVSDSVQDVRNAGMTNAKPAILLMIRKLPEANIIQTVDSIRARLPELQQTIPAAIDLQIAQDRSPTIRASLEEVEQTLVISVALVILVVFLFLRSGRATLIPAVAVPVSLIGTFAAMYLCGFSLNNLSLMALTIATGFVVDDAIVVLENISRHLEAGMKPLQAALQGSREVGFTVLSMSLSLVAVFLPLLLMGGLPGRLLREFAVTLSVAIGISLAVSLTLTPMMCGWLLKSGKPHQPTRNRGFGRLLVAVQGGYGKSLKWVLKHSRLTGLVVLGTIALSVWLYISIPKTFFPEQDTGVLMGGIQADQSISFQAMRGKLQDFMKIIREDPAVDNVTGFTGGSRVNSGMMFITLKPRDQRHETAQQVIDRLRKKLANEPGANLFLMAVQDIRVGGRQSNASYQYTLLSDDLSALREWEPKIRKALAALPELADVNSDQQDNGAEMDLVYDRDTMSRLGISVQDANNLLNNAFGQRQISTIYQPLNQYKVVMEVDPAYTQDVSALDKMFVINSDGKPIPLAYFAKWQPANAPLSVNHQGLSAASTISFNLPTGRSLSEASEAIDRAMTQLGVPSSVRGSFAGTAQVFQQTMNAQVILILAAIATVYIVLGVLYESYVHPLTILSTLPSAGVGALLALEIFDAPFSLIALIGIMLLIGIVKKNAIMMVDFALEAQRNGNLTPEEAIFQACLLRFRPIMMTTLAALFGALPLVLSGGDGSELRQPLGITIVGGLVMSQLLTLYTTPVVYLFFDRLRLRFSRHSSQPVSE</sequence>
<reference key="1">
    <citation type="submission" date="2006-09" db="EMBL/GenBank/DDBJ databases">
        <authorList>
            <consortium name="The Klebsiella pneumonia Genome Sequencing Project"/>
            <person name="McClelland M."/>
            <person name="Sanderson E.K."/>
            <person name="Spieth J."/>
            <person name="Clifton W.S."/>
            <person name="Latreille P."/>
            <person name="Sabo A."/>
            <person name="Pepin K."/>
            <person name="Bhonagiri V."/>
            <person name="Porwollik S."/>
            <person name="Ali J."/>
            <person name="Wilson R.K."/>
        </authorList>
    </citation>
    <scope>NUCLEOTIDE SEQUENCE [LARGE SCALE GENOMIC DNA]</scope>
    <source>
        <strain>ATCC 700721 / MGH 78578</strain>
    </source>
</reference>
<organism>
    <name type="scientific">Klebsiella pneumoniae subsp. pneumoniae (strain ATCC 700721 / MGH 78578)</name>
    <dbReference type="NCBI Taxonomy" id="272620"/>
    <lineage>
        <taxon>Bacteria</taxon>
        <taxon>Pseudomonadati</taxon>
        <taxon>Pseudomonadota</taxon>
        <taxon>Gammaproteobacteria</taxon>
        <taxon>Enterobacterales</taxon>
        <taxon>Enterobacteriaceae</taxon>
        <taxon>Klebsiella/Raoultella group</taxon>
        <taxon>Klebsiella</taxon>
        <taxon>Klebsiella pneumoniae complex</taxon>
    </lineage>
</organism>
<accession>A6TBH5</accession>
<protein>
    <recommendedName>
        <fullName evidence="1">Multidrug resistance protein MdtC</fullName>
    </recommendedName>
    <alternativeName>
        <fullName evidence="1">Multidrug transporter MdtC</fullName>
    </alternativeName>
</protein>
<proteinExistence type="inferred from homology"/>
<dbReference type="EMBL" id="CP000647">
    <property type="protein sequence ID" value="ABR77946.1"/>
    <property type="molecule type" value="Genomic_DNA"/>
</dbReference>
<dbReference type="RefSeq" id="WP_002912617.1">
    <property type="nucleotide sequence ID" value="NC_009648.1"/>
</dbReference>
<dbReference type="SMR" id="A6TBH5"/>
<dbReference type="STRING" id="272620.KPN_02528"/>
<dbReference type="PaxDb" id="272620-KPN_02528"/>
<dbReference type="EnsemblBacteria" id="ABR77946">
    <property type="protein sequence ID" value="ABR77946"/>
    <property type="gene ID" value="KPN_02528"/>
</dbReference>
<dbReference type="KEGG" id="kpn:KPN_02528"/>
<dbReference type="HOGENOM" id="CLU_002755_1_2_6"/>
<dbReference type="Proteomes" id="UP000000265">
    <property type="component" value="Chromosome"/>
</dbReference>
<dbReference type="GO" id="GO:0005886">
    <property type="term" value="C:plasma membrane"/>
    <property type="evidence" value="ECO:0007669"/>
    <property type="project" value="UniProtKB-SubCell"/>
</dbReference>
<dbReference type="GO" id="GO:0042910">
    <property type="term" value="F:xenobiotic transmembrane transporter activity"/>
    <property type="evidence" value="ECO:0007669"/>
    <property type="project" value="TreeGrafter"/>
</dbReference>
<dbReference type="FunFam" id="1.20.1640.10:FF:000001">
    <property type="entry name" value="Efflux pump membrane transporter"/>
    <property type="match status" value="1"/>
</dbReference>
<dbReference type="FunFam" id="3.30.70.1430:FF:000001">
    <property type="entry name" value="Efflux pump membrane transporter"/>
    <property type="match status" value="1"/>
</dbReference>
<dbReference type="FunFam" id="3.30.2090.10:FF:000004">
    <property type="entry name" value="Multidrug resistance protein MdtC"/>
    <property type="match status" value="1"/>
</dbReference>
<dbReference type="FunFam" id="3.30.2090.10:FF:000005">
    <property type="entry name" value="Multidrug resistance protein MdtC"/>
    <property type="match status" value="1"/>
</dbReference>
<dbReference type="FunFam" id="3.30.70.1430:FF:000004">
    <property type="entry name" value="Multidrug resistance protein MdtC"/>
    <property type="match status" value="1"/>
</dbReference>
<dbReference type="Gene3D" id="3.30.70.1430">
    <property type="entry name" value="Multidrug efflux transporter AcrB pore domain"/>
    <property type="match status" value="2"/>
</dbReference>
<dbReference type="Gene3D" id="3.30.70.1440">
    <property type="entry name" value="Multidrug efflux transporter AcrB pore domain"/>
    <property type="match status" value="1"/>
</dbReference>
<dbReference type="Gene3D" id="3.30.70.1320">
    <property type="entry name" value="Multidrug efflux transporter AcrB pore domain like"/>
    <property type="match status" value="1"/>
</dbReference>
<dbReference type="Gene3D" id="3.30.2090.10">
    <property type="entry name" value="Multidrug efflux transporter AcrB TolC docking domain, DN and DC subdomains"/>
    <property type="match status" value="2"/>
</dbReference>
<dbReference type="Gene3D" id="1.20.1640.10">
    <property type="entry name" value="Multidrug efflux transporter AcrB transmembrane domain"/>
    <property type="match status" value="2"/>
</dbReference>
<dbReference type="HAMAP" id="MF_01424">
    <property type="entry name" value="MdtC"/>
    <property type="match status" value="1"/>
</dbReference>
<dbReference type="InterPro" id="IPR027463">
    <property type="entry name" value="AcrB_DN_DC_subdom"/>
</dbReference>
<dbReference type="InterPro" id="IPR001036">
    <property type="entry name" value="Acrflvin-R"/>
</dbReference>
<dbReference type="InterPro" id="IPR023931">
    <property type="entry name" value="Multidrug-R_MdtC"/>
</dbReference>
<dbReference type="NCBIfam" id="NF007905">
    <property type="entry name" value="PRK10614.1"/>
    <property type="match status" value="1"/>
</dbReference>
<dbReference type="NCBIfam" id="NF033617">
    <property type="entry name" value="RND_permease_2"/>
    <property type="match status" value="1"/>
</dbReference>
<dbReference type="PANTHER" id="PTHR32063">
    <property type="match status" value="1"/>
</dbReference>
<dbReference type="PANTHER" id="PTHR32063:SF34">
    <property type="entry name" value="MULTIDRUG RESISTANCE PROTEIN MDTC"/>
    <property type="match status" value="1"/>
</dbReference>
<dbReference type="Pfam" id="PF00873">
    <property type="entry name" value="ACR_tran"/>
    <property type="match status" value="1"/>
</dbReference>
<dbReference type="PRINTS" id="PR00702">
    <property type="entry name" value="ACRIFLAVINRP"/>
</dbReference>
<dbReference type="SUPFAM" id="SSF82693">
    <property type="entry name" value="Multidrug efflux transporter AcrB pore domain, PN1, PN2, PC1 and PC2 subdomains"/>
    <property type="match status" value="4"/>
</dbReference>
<dbReference type="SUPFAM" id="SSF82714">
    <property type="entry name" value="Multidrug efflux transporter AcrB TolC docking domain, DN and DC subdomains"/>
    <property type="match status" value="2"/>
</dbReference>
<dbReference type="SUPFAM" id="SSF82866">
    <property type="entry name" value="Multidrug efflux transporter AcrB transmembrane domain"/>
    <property type="match status" value="2"/>
</dbReference>
<keyword id="KW-0997">Cell inner membrane</keyword>
<keyword id="KW-1003">Cell membrane</keyword>
<keyword id="KW-0472">Membrane</keyword>
<keyword id="KW-0812">Transmembrane</keyword>
<keyword id="KW-1133">Transmembrane helix</keyword>
<keyword id="KW-0813">Transport</keyword>
<name>MDTC_KLEP7</name>
<comment type="subunit">
    <text evidence="1">Part of a tripartite efflux system composed of MdtA, MdtB and MdtC. MdtC forms a heteromultimer with MdtB.</text>
</comment>
<comment type="subcellular location">
    <subcellularLocation>
        <location evidence="1">Cell inner membrane</location>
        <topology evidence="1">Multi-pass membrane protein</topology>
    </subcellularLocation>
</comment>
<comment type="similarity">
    <text evidence="1">Belongs to the resistance-nodulation-cell division (RND) (TC 2.A.6) family. MdtC subfamily.</text>
</comment>
<feature type="chain" id="PRO_1000024314" description="Multidrug resistance protein MdtC">
    <location>
        <begin position="1"/>
        <end position="1025"/>
    </location>
</feature>
<feature type="transmembrane region" description="Helical" evidence="1">
    <location>
        <begin position="15"/>
        <end position="35"/>
    </location>
</feature>
<feature type="transmembrane region" description="Helical" evidence="1">
    <location>
        <begin position="333"/>
        <end position="353"/>
    </location>
</feature>
<feature type="transmembrane region" description="Helical" evidence="1">
    <location>
        <begin position="360"/>
        <end position="380"/>
    </location>
</feature>
<feature type="transmembrane region" description="Helical" evidence="1">
    <location>
        <begin position="387"/>
        <end position="407"/>
    </location>
</feature>
<feature type="transmembrane region" description="Helical" evidence="1">
    <location>
        <begin position="431"/>
        <end position="451"/>
    </location>
</feature>
<feature type="transmembrane region" description="Helical" evidence="1">
    <location>
        <begin position="469"/>
        <end position="489"/>
    </location>
</feature>
<feature type="transmembrane region" description="Helical" evidence="1">
    <location>
        <begin position="528"/>
        <end position="548"/>
    </location>
</feature>
<feature type="transmembrane region" description="Helical" evidence="1">
    <location>
        <begin position="851"/>
        <end position="871"/>
    </location>
</feature>
<feature type="transmembrane region" description="Helical" evidence="1">
    <location>
        <begin position="875"/>
        <end position="895"/>
    </location>
</feature>
<feature type="transmembrane region" description="Helical" evidence="1">
    <location>
        <begin position="897"/>
        <end position="917"/>
    </location>
</feature>
<feature type="transmembrane region" description="Helical" evidence="1">
    <location>
        <begin position="953"/>
        <end position="973"/>
    </location>
</feature>
<feature type="transmembrane region" description="Helical" evidence="1">
    <location>
        <begin position="984"/>
        <end position="1004"/>
    </location>
</feature>
<evidence type="ECO:0000255" key="1">
    <source>
        <dbReference type="HAMAP-Rule" id="MF_01424"/>
    </source>
</evidence>
<gene>
    <name evidence="1" type="primary">mdtC</name>
    <name type="ordered locus">KPN78578_24850</name>
    <name type="ORF">KPN_02528</name>
</gene>